<proteinExistence type="inferred from homology"/>
<reference key="1">
    <citation type="submission" date="2007-12" db="EMBL/GenBank/DDBJ databases">
        <title>Complete sequence of Methylobacterium extorquens PA1.</title>
        <authorList>
            <consortium name="US DOE Joint Genome Institute"/>
            <person name="Copeland A."/>
            <person name="Lucas S."/>
            <person name="Lapidus A."/>
            <person name="Barry K."/>
            <person name="Glavina del Rio T."/>
            <person name="Dalin E."/>
            <person name="Tice H."/>
            <person name="Pitluck S."/>
            <person name="Saunders E."/>
            <person name="Brettin T."/>
            <person name="Bruce D."/>
            <person name="Detter J.C."/>
            <person name="Han C."/>
            <person name="Schmutz J."/>
            <person name="Larimer F."/>
            <person name="Land M."/>
            <person name="Hauser L."/>
            <person name="Kyrpides N."/>
            <person name="Kim E."/>
            <person name="Marx C."/>
            <person name="Richardson P."/>
        </authorList>
    </citation>
    <scope>NUCLEOTIDE SEQUENCE [LARGE SCALE GENOMIC DNA]</scope>
    <source>
        <strain>PA1</strain>
    </source>
</reference>
<name>RL23_METEP</name>
<protein>
    <recommendedName>
        <fullName evidence="1">Large ribosomal subunit protein uL23</fullName>
    </recommendedName>
    <alternativeName>
        <fullName evidence="2">50S ribosomal protein L23</fullName>
    </alternativeName>
</protein>
<accession>A9W4Q3</accession>
<feature type="chain" id="PRO_1000144587" description="Large ribosomal subunit protein uL23">
    <location>
        <begin position="1"/>
        <end position="98"/>
    </location>
</feature>
<organism>
    <name type="scientific">Methylorubrum extorquens (strain PA1)</name>
    <name type="common">Methylobacterium extorquens</name>
    <dbReference type="NCBI Taxonomy" id="419610"/>
    <lineage>
        <taxon>Bacteria</taxon>
        <taxon>Pseudomonadati</taxon>
        <taxon>Pseudomonadota</taxon>
        <taxon>Alphaproteobacteria</taxon>
        <taxon>Hyphomicrobiales</taxon>
        <taxon>Methylobacteriaceae</taxon>
        <taxon>Methylorubrum</taxon>
    </lineage>
</organism>
<evidence type="ECO:0000255" key="1">
    <source>
        <dbReference type="HAMAP-Rule" id="MF_01369"/>
    </source>
</evidence>
<evidence type="ECO:0000305" key="2"/>
<comment type="function">
    <text evidence="1">One of the early assembly proteins it binds 23S rRNA. One of the proteins that surrounds the polypeptide exit tunnel on the outside of the ribosome. Forms the main docking site for trigger factor binding to the ribosome.</text>
</comment>
<comment type="subunit">
    <text evidence="1">Part of the 50S ribosomal subunit. Contacts protein L29, and trigger factor when it is bound to the ribosome.</text>
</comment>
<comment type="similarity">
    <text evidence="1">Belongs to the universal ribosomal protein uL23 family.</text>
</comment>
<gene>
    <name evidence="1" type="primary">rplW</name>
    <name type="ordered locus">Mext_2164</name>
</gene>
<dbReference type="EMBL" id="CP000908">
    <property type="protein sequence ID" value="ABY30559.1"/>
    <property type="molecule type" value="Genomic_DNA"/>
</dbReference>
<dbReference type="RefSeq" id="WP_003597094.1">
    <property type="nucleotide sequence ID" value="NC_010172.1"/>
</dbReference>
<dbReference type="SMR" id="A9W4Q3"/>
<dbReference type="KEGG" id="mex:Mext_2164"/>
<dbReference type="eggNOG" id="COG0089">
    <property type="taxonomic scope" value="Bacteria"/>
</dbReference>
<dbReference type="HOGENOM" id="CLU_037562_3_1_5"/>
<dbReference type="BioCyc" id="MEXT419610:MEXT_RS10925-MONOMER"/>
<dbReference type="GO" id="GO:1990904">
    <property type="term" value="C:ribonucleoprotein complex"/>
    <property type="evidence" value="ECO:0007669"/>
    <property type="project" value="UniProtKB-KW"/>
</dbReference>
<dbReference type="GO" id="GO:0005840">
    <property type="term" value="C:ribosome"/>
    <property type="evidence" value="ECO:0007669"/>
    <property type="project" value="UniProtKB-KW"/>
</dbReference>
<dbReference type="GO" id="GO:0019843">
    <property type="term" value="F:rRNA binding"/>
    <property type="evidence" value="ECO:0007669"/>
    <property type="project" value="UniProtKB-UniRule"/>
</dbReference>
<dbReference type="GO" id="GO:0003735">
    <property type="term" value="F:structural constituent of ribosome"/>
    <property type="evidence" value="ECO:0007669"/>
    <property type="project" value="InterPro"/>
</dbReference>
<dbReference type="GO" id="GO:0006412">
    <property type="term" value="P:translation"/>
    <property type="evidence" value="ECO:0007669"/>
    <property type="project" value="UniProtKB-UniRule"/>
</dbReference>
<dbReference type="FunFam" id="3.30.70.330:FF:000001">
    <property type="entry name" value="50S ribosomal protein L23"/>
    <property type="match status" value="1"/>
</dbReference>
<dbReference type="Gene3D" id="3.30.70.330">
    <property type="match status" value="1"/>
</dbReference>
<dbReference type="HAMAP" id="MF_01369_B">
    <property type="entry name" value="Ribosomal_uL23_B"/>
    <property type="match status" value="1"/>
</dbReference>
<dbReference type="InterPro" id="IPR012677">
    <property type="entry name" value="Nucleotide-bd_a/b_plait_sf"/>
</dbReference>
<dbReference type="InterPro" id="IPR013025">
    <property type="entry name" value="Ribosomal_uL23-like"/>
</dbReference>
<dbReference type="InterPro" id="IPR012678">
    <property type="entry name" value="Ribosomal_uL23/eL15/eS24_sf"/>
</dbReference>
<dbReference type="InterPro" id="IPR001014">
    <property type="entry name" value="Ribosomal_uL23_CS"/>
</dbReference>
<dbReference type="NCBIfam" id="NF004359">
    <property type="entry name" value="PRK05738.1-3"/>
    <property type="match status" value="1"/>
</dbReference>
<dbReference type="NCBIfam" id="NF004360">
    <property type="entry name" value="PRK05738.1-5"/>
    <property type="match status" value="1"/>
</dbReference>
<dbReference type="NCBIfam" id="NF004363">
    <property type="entry name" value="PRK05738.2-4"/>
    <property type="match status" value="1"/>
</dbReference>
<dbReference type="NCBIfam" id="NF004366">
    <property type="entry name" value="PRK05738.3-2"/>
    <property type="match status" value="1"/>
</dbReference>
<dbReference type="PANTHER" id="PTHR11620">
    <property type="entry name" value="60S RIBOSOMAL PROTEIN L23A"/>
    <property type="match status" value="1"/>
</dbReference>
<dbReference type="Pfam" id="PF00276">
    <property type="entry name" value="Ribosomal_L23"/>
    <property type="match status" value="1"/>
</dbReference>
<dbReference type="SUPFAM" id="SSF54189">
    <property type="entry name" value="Ribosomal proteins S24e, L23 and L15e"/>
    <property type="match status" value="1"/>
</dbReference>
<dbReference type="PROSITE" id="PS00050">
    <property type="entry name" value="RIBOSOMAL_L23"/>
    <property type="match status" value="1"/>
</dbReference>
<sequence length="98" mass="10842">MSADPRHYDIIVSPVITEKATNLTEQNKVVFRVAPKATKPQIKEAVERLFDVKVTGVNTLTTKGKKKFFRGQRGQRSDVKKAIVTLAEGDTIDVTTGL</sequence>
<keyword id="KW-0687">Ribonucleoprotein</keyword>
<keyword id="KW-0689">Ribosomal protein</keyword>
<keyword id="KW-0694">RNA-binding</keyword>
<keyword id="KW-0699">rRNA-binding</keyword>